<name>TAF6_HUMAN</name>
<reference key="1">
    <citation type="journal article" date="1993" name="EMBO J.">
        <title>Cloning and expression of Drosophila TAFII60 and human TAFII70 reveal conserved interactions with other subunits of TFIID.</title>
        <authorList>
            <person name="Weinzierl R.O."/>
            <person name="Ruppert S."/>
            <person name="Dynlacht B.D."/>
            <person name="Tanese N."/>
            <person name="Tjian R."/>
        </authorList>
    </citation>
    <scope>NUCLEOTIDE SEQUENCE [MRNA] (ISOFORMS 1 AND 2)</scope>
    <scope>PROTEIN SEQUENCE OF 78-95 AND 501-521</scope>
    <scope>INTERACTION WITH TBP AND TAF1</scope>
    <source>
        <tissue>Cervix carcinoma</tissue>
    </source>
</reference>
<reference key="2">
    <citation type="journal article" date="1995" name="Proc. Natl. Acad. Sci. U.S.A.">
        <title>Evolutionary conservation of human TATA-binding-polypeptide-associated factors TAFII31 and TAFII80 and interactions of TAFII80 with other TAFs and with general transcription factors.</title>
        <authorList>
            <person name="Hisatake K."/>
            <person name="Ohta T."/>
            <person name="Takada R."/>
            <person name="Guermah M."/>
            <person name="Horikoshi M."/>
            <person name="Nakatani Y."/>
            <person name="Roeder R.G."/>
        </authorList>
    </citation>
    <scope>NUCLEOTIDE SEQUENCE [MRNA] (ISOFORM 1)</scope>
    <scope>PROTEIN SEQUENCE OF 78-103; 113-127; 368-383 AND 441-455</scope>
    <scope>INTERACTION WITH TBP; TAF1; TAF9; TAF12; GTF2F1 AND GTF2E1</scope>
    <source>
        <tissue>Placenta</tissue>
    </source>
</reference>
<reference key="3">
    <citation type="journal article" date="2004" name="Nat. Genet.">
        <title>Complete sequencing and characterization of 21,243 full-length human cDNAs.</title>
        <authorList>
            <person name="Ota T."/>
            <person name="Suzuki Y."/>
            <person name="Nishikawa T."/>
            <person name="Otsuki T."/>
            <person name="Sugiyama T."/>
            <person name="Irie R."/>
            <person name="Wakamatsu A."/>
            <person name="Hayashi K."/>
            <person name="Sato H."/>
            <person name="Nagai K."/>
            <person name="Kimura K."/>
            <person name="Makita H."/>
            <person name="Sekine M."/>
            <person name="Obayashi M."/>
            <person name="Nishi T."/>
            <person name="Shibahara T."/>
            <person name="Tanaka T."/>
            <person name="Ishii S."/>
            <person name="Yamamoto J."/>
            <person name="Saito K."/>
            <person name="Kawai Y."/>
            <person name="Isono Y."/>
            <person name="Nakamura Y."/>
            <person name="Nagahari K."/>
            <person name="Murakami K."/>
            <person name="Yasuda T."/>
            <person name="Iwayanagi T."/>
            <person name="Wagatsuma M."/>
            <person name="Shiratori A."/>
            <person name="Sudo H."/>
            <person name="Hosoiri T."/>
            <person name="Kaku Y."/>
            <person name="Kodaira H."/>
            <person name="Kondo H."/>
            <person name="Sugawara M."/>
            <person name="Takahashi M."/>
            <person name="Kanda K."/>
            <person name="Yokoi T."/>
            <person name="Furuya T."/>
            <person name="Kikkawa E."/>
            <person name="Omura Y."/>
            <person name="Abe K."/>
            <person name="Kamihara K."/>
            <person name="Katsuta N."/>
            <person name="Sato K."/>
            <person name="Tanikawa M."/>
            <person name="Yamazaki M."/>
            <person name="Ninomiya K."/>
            <person name="Ishibashi T."/>
            <person name="Yamashita H."/>
            <person name="Murakawa K."/>
            <person name="Fujimori K."/>
            <person name="Tanai H."/>
            <person name="Kimata M."/>
            <person name="Watanabe M."/>
            <person name="Hiraoka S."/>
            <person name="Chiba Y."/>
            <person name="Ishida S."/>
            <person name="Ono Y."/>
            <person name="Takiguchi S."/>
            <person name="Watanabe S."/>
            <person name="Yosida M."/>
            <person name="Hotuta T."/>
            <person name="Kusano J."/>
            <person name="Kanehori K."/>
            <person name="Takahashi-Fujii A."/>
            <person name="Hara H."/>
            <person name="Tanase T.-O."/>
            <person name="Nomura Y."/>
            <person name="Togiya S."/>
            <person name="Komai F."/>
            <person name="Hara R."/>
            <person name="Takeuchi K."/>
            <person name="Arita M."/>
            <person name="Imose N."/>
            <person name="Musashino K."/>
            <person name="Yuuki H."/>
            <person name="Oshima A."/>
            <person name="Sasaki N."/>
            <person name="Aotsuka S."/>
            <person name="Yoshikawa Y."/>
            <person name="Matsunawa H."/>
            <person name="Ichihara T."/>
            <person name="Shiohata N."/>
            <person name="Sano S."/>
            <person name="Moriya S."/>
            <person name="Momiyama H."/>
            <person name="Satoh N."/>
            <person name="Takami S."/>
            <person name="Terashima Y."/>
            <person name="Suzuki O."/>
            <person name="Nakagawa S."/>
            <person name="Senoh A."/>
            <person name="Mizoguchi H."/>
            <person name="Goto Y."/>
            <person name="Shimizu F."/>
            <person name="Wakebe H."/>
            <person name="Hishigaki H."/>
            <person name="Watanabe T."/>
            <person name="Sugiyama A."/>
            <person name="Takemoto M."/>
            <person name="Kawakami B."/>
            <person name="Yamazaki M."/>
            <person name="Watanabe K."/>
            <person name="Kumagai A."/>
            <person name="Itakura S."/>
            <person name="Fukuzumi Y."/>
            <person name="Fujimori Y."/>
            <person name="Komiyama M."/>
            <person name="Tashiro H."/>
            <person name="Tanigami A."/>
            <person name="Fujiwara T."/>
            <person name="Ono T."/>
            <person name="Yamada K."/>
            <person name="Fujii Y."/>
            <person name="Ozaki K."/>
            <person name="Hirao M."/>
            <person name="Ohmori Y."/>
            <person name="Kawabata A."/>
            <person name="Hikiji T."/>
            <person name="Kobatake N."/>
            <person name="Inagaki H."/>
            <person name="Ikema Y."/>
            <person name="Okamoto S."/>
            <person name="Okitani R."/>
            <person name="Kawakami T."/>
            <person name="Noguchi S."/>
            <person name="Itoh T."/>
            <person name="Shigeta K."/>
            <person name="Senba T."/>
            <person name="Matsumura K."/>
            <person name="Nakajima Y."/>
            <person name="Mizuno T."/>
            <person name="Morinaga M."/>
            <person name="Sasaki M."/>
            <person name="Togashi T."/>
            <person name="Oyama M."/>
            <person name="Hata H."/>
            <person name="Watanabe M."/>
            <person name="Komatsu T."/>
            <person name="Mizushima-Sugano J."/>
            <person name="Satoh T."/>
            <person name="Shirai Y."/>
            <person name="Takahashi Y."/>
            <person name="Nakagawa K."/>
            <person name="Okumura K."/>
            <person name="Nagase T."/>
            <person name="Nomura N."/>
            <person name="Kikuchi H."/>
            <person name="Masuho Y."/>
            <person name="Yamashita R."/>
            <person name="Nakai K."/>
            <person name="Yada T."/>
            <person name="Nakamura Y."/>
            <person name="Ohara O."/>
            <person name="Isogai T."/>
            <person name="Sugano S."/>
        </authorList>
    </citation>
    <scope>NUCLEOTIDE SEQUENCE [LARGE SCALE MRNA] (ISOFORM 3)</scope>
</reference>
<reference key="4">
    <citation type="journal article" date="2007" name="BMC Genomics">
        <title>The full-ORF clone resource of the German cDNA consortium.</title>
        <authorList>
            <person name="Bechtel S."/>
            <person name="Rosenfelder H."/>
            <person name="Duda A."/>
            <person name="Schmidt C.P."/>
            <person name="Ernst U."/>
            <person name="Wellenreuther R."/>
            <person name="Mehrle A."/>
            <person name="Schuster C."/>
            <person name="Bahr A."/>
            <person name="Bloecker H."/>
            <person name="Heubner D."/>
            <person name="Hoerlein A."/>
            <person name="Michel G."/>
            <person name="Wedler H."/>
            <person name="Koehrer K."/>
            <person name="Ottenwaelder B."/>
            <person name="Poustka A."/>
            <person name="Wiemann S."/>
            <person name="Schupp I."/>
        </authorList>
    </citation>
    <scope>NUCLEOTIDE SEQUENCE [LARGE SCALE MRNA] (ISOFORM 1)</scope>
    <source>
        <tissue>Brain cortex</tissue>
    </source>
</reference>
<reference key="5">
    <citation type="submission" date="2002-09" db="EMBL/GenBank/DDBJ databases">
        <authorList>
            <consortium name="NIEHS SNPs program"/>
        </authorList>
    </citation>
    <scope>NUCLEOTIDE SEQUENCE [GENOMIC DNA]</scope>
    <scope>VARIANT SER-36</scope>
</reference>
<reference key="6">
    <citation type="journal article" date="2003" name="Science">
        <title>Human chromosome 7: DNA sequence and biology.</title>
        <authorList>
            <person name="Scherer S.W."/>
            <person name="Cheung J."/>
            <person name="MacDonald J.R."/>
            <person name="Osborne L.R."/>
            <person name="Nakabayashi K."/>
            <person name="Herbrick J.-A."/>
            <person name="Carson A.R."/>
            <person name="Parker-Katiraee L."/>
            <person name="Skaug J."/>
            <person name="Khaja R."/>
            <person name="Zhang J."/>
            <person name="Hudek A.K."/>
            <person name="Li M."/>
            <person name="Haddad M."/>
            <person name="Duggan G.E."/>
            <person name="Fernandez B.A."/>
            <person name="Kanematsu E."/>
            <person name="Gentles S."/>
            <person name="Christopoulos C.C."/>
            <person name="Choufani S."/>
            <person name="Kwasnicka D."/>
            <person name="Zheng X.H."/>
            <person name="Lai Z."/>
            <person name="Nusskern D.R."/>
            <person name="Zhang Q."/>
            <person name="Gu Z."/>
            <person name="Lu F."/>
            <person name="Zeesman S."/>
            <person name="Nowaczyk M.J."/>
            <person name="Teshima I."/>
            <person name="Chitayat D."/>
            <person name="Shuman C."/>
            <person name="Weksberg R."/>
            <person name="Zackai E.H."/>
            <person name="Grebe T.A."/>
            <person name="Cox S.R."/>
            <person name="Kirkpatrick S.J."/>
            <person name="Rahman N."/>
            <person name="Friedman J.M."/>
            <person name="Heng H.H.Q."/>
            <person name="Pelicci P.G."/>
            <person name="Lo-Coco F."/>
            <person name="Belloni E."/>
            <person name="Shaffer L.G."/>
            <person name="Pober B."/>
            <person name="Morton C.C."/>
            <person name="Gusella J.F."/>
            <person name="Bruns G.A.P."/>
            <person name="Korf B.R."/>
            <person name="Quade B.J."/>
            <person name="Ligon A.H."/>
            <person name="Ferguson H."/>
            <person name="Higgins A.W."/>
            <person name="Leach N.T."/>
            <person name="Herrick S.R."/>
            <person name="Lemyre E."/>
            <person name="Farra C.G."/>
            <person name="Kim H.-G."/>
            <person name="Summers A.M."/>
            <person name="Gripp K.W."/>
            <person name="Roberts W."/>
            <person name="Szatmari P."/>
            <person name="Winsor E.J.T."/>
            <person name="Grzeschik K.-H."/>
            <person name="Teebi A."/>
            <person name="Minassian B.A."/>
            <person name="Kere J."/>
            <person name="Armengol L."/>
            <person name="Pujana M.A."/>
            <person name="Estivill X."/>
            <person name="Wilson M.D."/>
            <person name="Koop B.F."/>
            <person name="Tosi S."/>
            <person name="Moore G.E."/>
            <person name="Boright A.P."/>
            <person name="Zlotorynski E."/>
            <person name="Kerem B."/>
            <person name="Kroisel P.M."/>
            <person name="Petek E."/>
            <person name="Oscier D.G."/>
            <person name="Mould S.J."/>
            <person name="Doehner H."/>
            <person name="Doehner K."/>
            <person name="Rommens J.M."/>
            <person name="Vincent J.B."/>
            <person name="Venter J.C."/>
            <person name="Li P.W."/>
            <person name="Mural R.J."/>
            <person name="Adams M.D."/>
            <person name="Tsui L.-C."/>
        </authorList>
    </citation>
    <scope>NUCLEOTIDE SEQUENCE [LARGE SCALE GENOMIC DNA]</scope>
</reference>
<reference key="7">
    <citation type="submission" date="2005-09" db="EMBL/GenBank/DDBJ databases">
        <authorList>
            <person name="Mural R.J."/>
            <person name="Istrail S."/>
            <person name="Sutton G.G."/>
            <person name="Florea L."/>
            <person name="Halpern A.L."/>
            <person name="Mobarry C.M."/>
            <person name="Lippert R."/>
            <person name="Walenz B."/>
            <person name="Shatkay H."/>
            <person name="Dew I."/>
            <person name="Miller J.R."/>
            <person name="Flanigan M.J."/>
            <person name="Edwards N.J."/>
            <person name="Bolanos R."/>
            <person name="Fasulo D."/>
            <person name="Halldorsson B.V."/>
            <person name="Hannenhalli S."/>
            <person name="Turner R."/>
            <person name="Yooseph S."/>
            <person name="Lu F."/>
            <person name="Nusskern D.R."/>
            <person name="Shue B.C."/>
            <person name="Zheng X.H."/>
            <person name="Zhong F."/>
            <person name="Delcher A.L."/>
            <person name="Huson D.H."/>
            <person name="Kravitz S.A."/>
            <person name="Mouchard L."/>
            <person name="Reinert K."/>
            <person name="Remington K.A."/>
            <person name="Clark A.G."/>
            <person name="Waterman M.S."/>
            <person name="Eichler E.E."/>
            <person name="Adams M.D."/>
            <person name="Hunkapiller M.W."/>
            <person name="Myers E.W."/>
            <person name="Venter J.C."/>
        </authorList>
    </citation>
    <scope>NUCLEOTIDE SEQUENCE [LARGE SCALE GENOMIC DNA]</scope>
</reference>
<reference key="8">
    <citation type="journal article" date="2004" name="Genome Res.">
        <title>The status, quality, and expansion of the NIH full-length cDNA project: the Mammalian Gene Collection (MGC).</title>
        <authorList>
            <consortium name="The MGC Project Team"/>
        </authorList>
    </citation>
    <scope>NUCLEOTIDE SEQUENCE [LARGE SCALE MRNA] (ISOFORM 1)</scope>
    <source>
        <tissue>Pancreas</tissue>
    </source>
</reference>
<reference key="9">
    <citation type="journal article" date="2001" name="Mol. Cell">
        <title>Identification of hTAF(II)80 delta links apoptotic signaling pathways to transcription factor TFIID function.</title>
        <authorList>
            <person name="Bell B."/>
            <person name="Scheer E."/>
            <person name="Tora L."/>
        </authorList>
    </citation>
    <scope>IDENTIFICATION (ISOFORM 4)</scope>
    <scope>FUNCTION (ISOFORM 4)</scope>
    <scope>IDENTIFICATION IN A TFIID-LIKE COMPLEX (ISOFORM 4)</scope>
    <scope>INDUCTION (ISOFORM 4)</scope>
    <scope>CLEAVAGE (ISOFORM 4)</scope>
</reference>
<reference key="10">
    <citation type="journal article" date="2003" name="Proteomics">
        <title>Novel subunits of the TATA binding protein free TAFII-containing transcription complex identified by matrix-assisted laser desorption/ionization-time of flight mass spectrometry following one-dimensional gel electrophoresis.</title>
        <authorList>
            <person name="Cavusoglu N."/>
            <person name="Brand M."/>
            <person name="Tora L."/>
            <person name="van Dorsselaer A."/>
        </authorList>
    </citation>
    <scope>IDENTIFICATION IN THE TFTC-HAT COMPLEX</scope>
    <scope>IDENTIFICATION BY MASS SPECTROMETRY</scope>
</reference>
<reference key="11">
    <citation type="journal article" date="2005" name="Cell">
        <title>Physical association and coordinate function of the H3 K4 methyltransferase MLL1 and the H4 K16 acetyltransferase MOF.</title>
        <authorList>
            <person name="Dou Y."/>
            <person name="Milne T.A."/>
            <person name="Tackett A.J."/>
            <person name="Smith E.R."/>
            <person name="Fukuda A."/>
            <person name="Wysocka J."/>
            <person name="Allis C.D."/>
            <person name="Chait B.T."/>
            <person name="Hess J.L."/>
            <person name="Roeder R.G."/>
        </authorList>
    </citation>
    <scope>IDENTIFICATION IN THE MLL1/MLL COMPLEX</scope>
</reference>
<reference key="12">
    <citation type="journal article" date="2005" name="Mol. Cell. Biol.">
        <title>Core promoter binding by histone-like TAF complexes.</title>
        <authorList>
            <person name="Shao H."/>
            <person name="Revach M."/>
            <person name="Moshonov S."/>
            <person name="Tzuman Y."/>
            <person name="Gazit K."/>
            <person name="Albeck S."/>
            <person name="Unger T."/>
            <person name="Dikstein R."/>
        </authorList>
    </citation>
    <scope>INTERACTION WITH TAF9 IN A COMPLEX WITH TAF6; TAF9; TAF12 AND TAF4B</scope>
    <scope>DNA-BINDING</scope>
</reference>
<reference key="13">
    <citation type="journal article" date="2006" name="Nat. Biotechnol.">
        <title>A probability-based approach for high-throughput protein phosphorylation analysis and site localization.</title>
        <authorList>
            <person name="Beausoleil S.A."/>
            <person name="Villen J."/>
            <person name="Gerber S.A."/>
            <person name="Rush J."/>
            <person name="Gygi S.P."/>
        </authorList>
    </citation>
    <scope>PHOSPHORYLATION [LARGE SCALE ANALYSIS] AT SER-653 AND THR-660</scope>
    <scope>IDENTIFICATION BY MASS SPECTROMETRY [LARGE SCALE ANALYSIS]</scope>
    <source>
        <tissue>Cervix carcinoma</tissue>
    </source>
</reference>
<reference key="14">
    <citation type="journal article" date="2008" name="PLoS ONE">
        <title>TAF6delta controls apoptosis and gene expression in the absence of p53.</title>
        <authorList>
            <person name="Wilhelm E."/>
            <person name="Pellay F.X."/>
            <person name="Benecke A."/>
            <person name="Bell B."/>
        </authorList>
    </citation>
    <scope>FUNCTION (ISOFORM 4)</scope>
    <scope>SUBCELLULAR LOCATION (ISOFORM 4)</scope>
</reference>
<reference key="15">
    <citation type="journal article" date="2008" name="Proc. Natl. Acad. Sci. U.S.A.">
        <title>A quantitative atlas of mitotic phosphorylation.</title>
        <authorList>
            <person name="Dephoure N."/>
            <person name="Zhou C."/>
            <person name="Villen J."/>
            <person name="Beausoleil S.A."/>
            <person name="Bakalarski C.E."/>
            <person name="Elledge S.J."/>
            <person name="Gygi S.P."/>
        </authorList>
    </citation>
    <scope>IDENTIFICATION BY MASS SPECTROMETRY [LARGE SCALE ANALYSIS]</scope>
    <source>
        <tissue>Cervix carcinoma</tissue>
    </source>
</reference>
<reference key="16">
    <citation type="journal article" date="2009" name="Anal. Chem.">
        <title>Lys-N and trypsin cover complementary parts of the phosphoproteome in a refined SCX-based approach.</title>
        <authorList>
            <person name="Gauci S."/>
            <person name="Helbig A.O."/>
            <person name="Slijper M."/>
            <person name="Krijgsveld J."/>
            <person name="Heck A.J."/>
            <person name="Mohammed S."/>
        </authorList>
    </citation>
    <scope>IDENTIFICATION BY MASS SPECTROMETRY [LARGE SCALE ANALYSIS]</scope>
</reference>
<reference key="17">
    <citation type="journal article" date="2009" name="Sci. Signal.">
        <title>Quantitative phosphoproteomic analysis of T cell receptor signaling reveals system-wide modulation of protein-protein interactions.</title>
        <authorList>
            <person name="Mayya V."/>
            <person name="Lundgren D.H."/>
            <person name="Hwang S.-I."/>
            <person name="Rezaul K."/>
            <person name="Wu L."/>
            <person name="Eng J.K."/>
            <person name="Rodionov V."/>
            <person name="Han D.K."/>
        </authorList>
    </citation>
    <scope>PHOSPHORYLATION [LARGE SCALE ANALYSIS] AT SER-653 AND THR-660</scope>
    <scope>IDENTIFICATION BY MASS SPECTROMETRY [LARGE SCALE ANALYSIS]</scope>
    <source>
        <tissue>Leukemic T-cell</tissue>
    </source>
</reference>
<reference key="18">
    <citation type="journal article" date="2010" name="BMC Mol. Biol.">
        <title>TAF6delta orchestrates an apoptotic transcriptome profile and interacts functionally with p53.</title>
        <authorList>
            <person name="Wilhelm E."/>
            <person name="Kornete M."/>
            <person name="Targat B."/>
            <person name="Vigneault-Edwards J."/>
            <person name="Frontini M."/>
            <person name="Tora L."/>
            <person name="Benecke A."/>
            <person name="Bell B."/>
        </authorList>
    </citation>
    <scope>FUNCTION (ISOFORM 4)</scope>
    <scope>INTERACTION WITH TP53 (ISOFORMS 1 AND 4)</scope>
</reference>
<reference key="19">
    <citation type="journal article" date="2010" name="Sci. Signal.">
        <title>Quantitative phosphoproteomics reveals widespread full phosphorylation site occupancy during mitosis.</title>
        <authorList>
            <person name="Olsen J.V."/>
            <person name="Vermeulen M."/>
            <person name="Santamaria A."/>
            <person name="Kumar C."/>
            <person name="Miller M.L."/>
            <person name="Jensen L.J."/>
            <person name="Gnad F."/>
            <person name="Cox J."/>
            <person name="Jensen T.S."/>
            <person name="Nigg E.A."/>
            <person name="Brunak S."/>
            <person name="Mann M."/>
        </authorList>
    </citation>
    <scope>IDENTIFICATION BY MASS SPECTROMETRY [LARGE SCALE ANALYSIS]</scope>
    <source>
        <tissue>Cervix carcinoma</tissue>
    </source>
</reference>
<reference key="20">
    <citation type="journal article" date="2011" name="BMC Syst. Biol.">
        <title>Initial characterization of the human central proteome.</title>
        <authorList>
            <person name="Burkard T.R."/>
            <person name="Planyavsky M."/>
            <person name="Kaupe I."/>
            <person name="Breitwieser F.P."/>
            <person name="Buerckstuemmer T."/>
            <person name="Bennett K.L."/>
            <person name="Superti-Furga G."/>
            <person name="Colinge J."/>
        </authorList>
    </citation>
    <scope>IDENTIFICATION BY MASS SPECTROMETRY [LARGE SCALE ANALYSIS]</scope>
</reference>
<reference key="21">
    <citation type="journal article" date="2013" name="J. Proteome Res.">
        <title>Toward a comprehensive characterization of a human cancer cell phosphoproteome.</title>
        <authorList>
            <person name="Zhou H."/>
            <person name="Di Palma S."/>
            <person name="Preisinger C."/>
            <person name="Peng M."/>
            <person name="Polat A.N."/>
            <person name="Heck A.J."/>
            <person name="Mohammed S."/>
        </authorList>
    </citation>
    <scope>PHOSPHORYLATION [LARGE SCALE ANALYSIS] AT THR-120; SER-634; SER-636; SER-653 AND THR-660</scope>
    <scope>IDENTIFICATION BY MASS SPECTROMETRY [LARGE SCALE ANALYSIS]</scope>
    <source>
        <tissue>Cervix carcinoma</tissue>
        <tissue>Erythroleukemia</tissue>
    </source>
</reference>
<reference key="22">
    <citation type="journal article" date="2014" name="J. Proteomics">
        <title>An enzyme assisted RP-RPLC approach for in-depth analysis of human liver phosphoproteome.</title>
        <authorList>
            <person name="Bian Y."/>
            <person name="Song C."/>
            <person name="Cheng K."/>
            <person name="Dong M."/>
            <person name="Wang F."/>
            <person name="Huang J."/>
            <person name="Sun D."/>
            <person name="Wang L."/>
            <person name="Ye M."/>
            <person name="Zou H."/>
        </authorList>
    </citation>
    <scope>PHOSPHORYLATION [LARGE SCALE ANALYSIS] AT SER-653 AND THR-660</scope>
    <scope>IDENTIFICATION BY MASS SPECTROMETRY [LARGE SCALE ANALYSIS]</scope>
    <source>
        <tissue>Liver</tissue>
    </source>
</reference>
<reference key="23">
    <citation type="journal article" date="2014" name="Mol. Cell. Proteomics">
        <title>Immunoaffinity enrichment and mass spectrometry analysis of protein methylation.</title>
        <authorList>
            <person name="Guo A."/>
            <person name="Gu H."/>
            <person name="Zhou J."/>
            <person name="Mulhern D."/>
            <person name="Wang Y."/>
            <person name="Lee K.A."/>
            <person name="Yang V."/>
            <person name="Aguiar M."/>
            <person name="Kornhauser J."/>
            <person name="Jia X."/>
            <person name="Ren J."/>
            <person name="Beausoleil S.A."/>
            <person name="Silva J.C."/>
            <person name="Vemulapalli V."/>
            <person name="Bedford M.T."/>
            <person name="Comb M.J."/>
        </authorList>
    </citation>
    <scope>METHYLATION [LARGE SCALE ANALYSIS] AT ARG-524</scope>
    <scope>IDENTIFICATION BY MASS SPECTROMETRY [LARGE SCALE ANALYSIS]</scope>
    <source>
        <tissue>Colon carcinoma</tissue>
    </source>
</reference>
<reference key="24">
    <citation type="journal article" date="2014" name="PLoS ONE">
        <title>Alternative splicing of TAF6: downstream transcriptome impacts and upstream RNA splice control elements.</title>
        <authorList>
            <person name="Kamtchueng C."/>
            <person name="Stebenne M.E."/>
            <person name="Delannoy A."/>
            <person name="Wilhelm E."/>
            <person name="Leger H."/>
            <person name="Benecke A.G."/>
            <person name="Bell B."/>
        </authorList>
    </citation>
    <scope>ALTERNATIVE SPLICING (ISOFORM 4)</scope>
</reference>
<reference key="25">
    <citation type="journal article" date="2018" name="Cell Death Dis.">
        <title>BIM and NOXA are mitochondrial effectors of TAF6delta-driven apoptosis.</title>
        <authorList>
            <person name="Delannoy A."/>
            <person name="Wilhelm E."/>
            <person name="Eilebrecht S."/>
            <person name="Alvarado-Cuevas E.M."/>
            <person name="Benecke A.G."/>
            <person name="Bell B."/>
        </authorList>
    </citation>
    <scope>FUNCTION (ISOFORM 4)</scope>
</reference>
<reference key="26">
    <citation type="journal article" date="2015" name="Cell Rep.">
        <title>Accelerating novel candidate gene discovery in neurogenetic disorders via whole-exome sequencing of prescreened multiplex consanguineous families.</title>
        <authorList>
            <person name="Alazami A.M."/>
            <person name="Patel N."/>
            <person name="Shamseldin H.E."/>
            <person name="Anazi S."/>
            <person name="Al-Dosari M.S."/>
            <person name="Alzahrani F."/>
            <person name="Hijazi H."/>
            <person name="Alshammari M."/>
            <person name="Aldahmesh M.A."/>
            <person name="Salih M.A."/>
            <person name="Faqeih E."/>
            <person name="Alhashem A."/>
            <person name="Bashiri F.A."/>
            <person name="Al-Owain M."/>
            <person name="Kentab A.Y."/>
            <person name="Sogaty S."/>
            <person name="Al Tala S."/>
            <person name="Temsah M.H."/>
            <person name="Tulbah M."/>
            <person name="Aljelaify R.F."/>
            <person name="Alshahwan S.A."/>
            <person name="Seidahmed M.Z."/>
            <person name="Alhadid A.A."/>
            <person name="Aldhalaan H."/>
            <person name="Alqallaf F."/>
            <person name="Kurdi W."/>
            <person name="Alfadhel M."/>
            <person name="Babay Z."/>
            <person name="Alsogheer M."/>
            <person name="Kaya N."/>
            <person name="Al-Hassnan Z.N."/>
            <person name="Abdel-Salam G.M."/>
            <person name="Al-Sannaa N."/>
            <person name="Al Mutairi F."/>
            <person name="El Khashab H.Y."/>
            <person name="Bohlega S."/>
            <person name="Jia X."/>
            <person name="Nguyen H.C."/>
            <person name="Hammami R."/>
            <person name="Adly N."/>
            <person name="Mohamed J.Y."/>
            <person name="Abdulwahab F."/>
            <person name="Ibrahim N."/>
            <person name="Naim E.A."/>
            <person name="Al-Younes B."/>
            <person name="Meyer B.F."/>
            <person name="Hashem M."/>
            <person name="Shaheen R."/>
            <person name="Xiong Y."/>
            <person name="Abouelhoda M."/>
            <person name="Aldeeri A.A."/>
            <person name="Monies D.M."/>
            <person name="Alkuraya F.S."/>
        </authorList>
    </citation>
    <scope>INVOLVEMENT IN ALYUS</scope>
    <scope>VARIANT ALYUS THR-71</scope>
</reference>
<reference key="27">
    <citation type="journal article" date="2015" name="J. Clin. Invest.">
        <title>Global transcriptional disturbances underlie Cornelia de Lange syndrome and related phenotypes.</title>
        <authorList>
            <person name="Yuan B."/>
            <person name="Pehlivan D."/>
            <person name="Karaca E."/>
            <person name="Patel N."/>
            <person name="Charng W.L."/>
            <person name="Gambin T."/>
            <person name="Gonzaga-Jauregui C."/>
            <person name="Sutton V.R."/>
            <person name="Yesil G."/>
            <person name="Bozdogan S.T."/>
            <person name="Tos T."/>
            <person name="Koparir A."/>
            <person name="Koparir E."/>
            <person name="Beck C.R."/>
            <person name="Gu S."/>
            <person name="Aslan H."/>
            <person name="Yuregir O.O."/>
            <person name="Al Rubeaan K."/>
            <person name="Alnaqeb D."/>
            <person name="Alshammari M.J."/>
            <person name="Bayram Y."/>
            <person name="Atik M.M."/>
            <person name="Aydin H."/>
            <person name="Geckinli B.B."/>
            <person name="Seven M."/>
            <person name="Ulucan H."/>
            <person name="Fenercioglu E."/>
            <person name="Ozen M."/>
            <person name="Jhangiani S."/>
            <person name="Muzny D.M."/>
            <person name="Boerwinkle E."/>
            <person name="Tuysuz B."/>
            <person name="Alkuraya F.S."/>
            <person name="Gibbs R.A."/>
            <person name="Lupski J.R."/>
        </authorList>
    </citation>
    <scope>INVOLVEMENT IN ALYUS</scope>
    <scope>VARIANTS ALYUS CYS-46 AND THR-71</scope>
    <scope>CHARACTERIZATION OF VARIANTS ALYUS CYS-46 AND THR-71</scope>
</reference>
<reference key="28">
    <citation type="journal article" date="2017" name="Nat. Struct. Mol. Biol.">
        <title>Site-specific mapping of the human SUMO proteome reveals co-modification with phosphorylation.</title>
        <authorList>
            <person name="Hendriks I.A."/>
            <person name="Lyon D."/>
            <person name="Young C."/>
            <person name="Jensen L.J."/>
            <person name="Vertegaal A.C."/>
            <person name="Nielsen M.L."/>
        </authorList>
    </citation>
    <scope>SUMOYLATION [LARGE SCALE ANALYSIS] AT LYS-196</scope>
    <scope>IDENTIFICATION BY MASS SPECTROMETRY [LARGE SCALE ANALYSIS]</scope>
</reference>
<reference evidence="22 23 24 25 26 27 28 29 30 31" key="29">
    <citation type="journal article" date="2021" name="Science">
        <title>Structural insights into preinitiation complex assembly on core promoters.</title>
        <authorList>
            <person name="Chen X."/>
            <person name="Qi Y."/>
            <person name="Wu Z."/>
            <person name="Wang X."/>
            <person name="Li J."/>
            <person name="Zhao D."/>
            <person name="Hou H."/>
            <person name="Li Y."/>
            <person name="Yu Z."/>
            <person name="Liu W."/>
            <person name="Wang M."/>
            <person name="Ren Y."/>
            <person name="Li Z."/>
            <person name="Yang H."/>
            <person name="Xu Y."/>
        </authorList>
    </citation>
    <scope>STRUCTURE BY ELECTRON MICROSCOPY (2.77 ANGSTROMS)</scope>
    <scope>FUNCTION</scope>
    <scope>IDENTIFICATION IN THE TFIID COMPLEX</scope>
    <scope>SUBUNIT</scope>
</reference>
<feature type="chain" id="PRO_0000118873" description="Transcription initiation factor TFIID subunit 6">
    <location>
        <begin position="1"/>
        <end position="677"/>
    </location>
</feature>
<feature type="region of interest" description="Disordered" evidence="3">
    <location>
        <begin position="142"/>
        <end position="204"/>
    </location>
</feature>
<feature type="region of interest" description="Disordered" evidence="3">
    <location>
        <begin position="524"/>
        <end position="574"/>
    </location>
</feature>
<feature type="region of interest" description="Disordered" evidence="3">
    <location>
        <begin position="611"/>
        <end position="677"/>
    </location>
</feature>
<feature type="compositionally biased region" description="Low complexity" evidence="3">
    <location>
        <begin position="554"/>
        <end position="574"/>
    </location>
</feature>
<feature type="compositionally biased region" description="Pro residues" evidence="3">
    <location>
        <begin position="624"/>
        <end position="634"/>
    </location>
</feature>
<feature type="compositionally biased region" description="Polar residues" evidence="3">
    <location>
        <begin position="663"/>
        <end position="677"/>
    </location>
</feature>
<feature type="modified residue" description="Phosphothreonine" evidence="34">
    <location>
        <position position="120"/>
    </location>
</feature>
<feature type="modified residue" description="Phosphothreonine" evidence="2">
    <location>
        <position position="248"/>
    </location>
</feature>
<feature type="modified residue" description="Phosphotyrosine" evidence="2">
    <location>
        <position position="253"/>
    </location>
</feature>
<feature type="modified residue" description="Phosphoserine" evidence="2">
    <location>
        <position position="264"/>
    </location>
</feature>
<feature type="modified residue" description="Omega-N-methylarginine" evidence="35">
    <location>
        <position position="524"/>
    </location>
</feature>
<feature type="modified residue" description="Phosphoserine" evidence="1">
    <location>
        <position position="626"/>
    </location>
</feature>
<feature type="modified residue" description="Phosphoserine" evidence="34">
    <location>
        <position position="634"/>
    </location>
</feature>
<feature type="modified residue" description="Phosphoserine" evidence="34">
    <location>
        <position position="636"/>
    </location>
</feature>
<feature type="modified residue" description="Phosphoserine" evidence="32 33 34 36">
    <location>
        <position position="653"/>
    </location>
</feature>
<feature type="modified residue" description="Phosphothreonine" evidence="32 33 34 36">
    <location>
        <position position="660"/>
    </location>
</feature>
<feature type="cross-link" description="Glycyl lysine isopeptide (Lys-Gly) (interchain with G-Cter in SUMO2)" evidence="37">
    <location>
        <position position="196"/>
    </location>
</feature>
<feature type="splice variant" id="VSP_043709" description="In isoform 3." evidence="18">
    <original>M</original>
    <variation>MTKRRLQTITACLQLREGSPSLHRGLHPSREEKRDSRM</variation>
    <location>
        <position position="1"/>
    </location>
</feature>
<feature type="splice variant" id="VSP_059851" description="In isoform 4." evidence="4">
    <location>
        <begin position="43"/>
        <end position="52"/>
    </location>
</feature>
<feature type="splice variant" id="VSP_037476" description="In isoform 2." evidence="20">
    <location>
        <begin position="477"/>
        <end position="486"/>
    </location>
</feature>
<feature type="sequence variant" id="VAR_014349" description="In dbSNP:rs4134897." evidence="16">
    <original>C</original>
    <variation>S</variation>
    <location>
        <position position="36"/>
    </location>
</feature>
<feature type="sequence variant" id="VAR_077840" description="In ALYUS; decreased interaction with TAF1 and TBP shown by functional expression studies in a Drosophila cell line; dbSNP:rs727503778." evidence="11">
    <original>R</original>
    <variation>C</variation>
    <location>
        <position position="46"/>
    </location>
</feature>
<feature type="sequence variant" id="VAR_077841" description="In ALYUS; decreased interaction with TAF1, TAF9 and TBP shown by functional expression studies in a Drosophila cell line; dbSNP:rs374993554." evidence="10 11">
    <original>I</original>
    <variation>T</variation>
    <location>
        <position position="71"/>
    </location>
</feature>
<feature type="sequence conflict" description="In Ref. 4; CAH10485." evidence="21" ref="4">
    <original>K</original>
    <variation>E</variation>
    <location>
        <position position="196"/>
    </location>
</feature>
<feature type="sequence conflict" description="In Ref. 4; CAH10485." evidence="21" ref="4">
    <original>R</original>
    <variation>W</variation>
    <location>
        <position position="417"/>
    </location>
</feature>
<feature type="helix" evidence="38">
    <location>
        <begin position="16"/>
        <end position="24"/>
    </location>
</feature>
<feature type="turn" evidence="38">
    <location>
        <begin position="25"/>
        <end position="27"/>
    </location>
</feature>
<feature type="helix" evidence="38">
    <location>
        <begin position="33"/>
        <end position="60"/>
    </location>
</feature>
<feature type="strand" evidence="38">
    <location>
        <begin position="64"/>
        <end position="66"/>
    </location>
</feature>
<feature type="helix" evidence="38">
    <location>
        <begin position="68"/>
        <end position="78"/>
    </location>
</feature>
<feature type="strand" evidence="38">
    <location>
        <begin position="83"/>
        <end position="87"/>
    </location>
</feature>
<feature type="strand" evidence="40">
    <location>
        <begin position="93"/>
        <end position="96"/>
    </location>
</feature>
<feature type="strand" evidence="39">
    <location>
        <begin position="104"/>
        <end position="106"/>
    </location>
</feature>
<feature type="strand" evidence="39">
    <location>
        <begin position="111"/>
        <end position="113"/>
    </location>
</feature>
<feature type="helix" evidence="40">
    <location>
        <begin position="116"/>
        <end position="119"/>
    </location>
</feature>
<feature type="strand" evidence="40">
    <location>
        <begin position="131"/>
        <end position="138"/>
    </location>
</feature>
<feature type="helix" evidence="41">
    <location>
        <begin position="218"/>
        <end position="230"/>
    </location>
</feature>
<feature type="helix" evidence="41">
    <location>
        <begin position="236"/>
        <end position="248"/>
    </location>
</feature>
<feature type="helix" evidence="41">
    <location>
        <begin position="250"/>
        <end position="252"/>
    </location>
</feature>
<feature type="helix" evidence="41">
    <location>
        <begin position="256"/>
        <end position="269"/>
    </location>
</feature>
<feature type="turn" evidence="41">
    <location>
        <begin position="271"/>
        <end position="274"/>
    </location>
</feature>
<feature type="helix" evidence="41">
    <location>
        <begin position="276"/>
        <end position="290"/>
    </location>
</feature>
<feature type="strand" evidence="41">
    <location>
        <begin position="293"/>
        <end position="295"/>
    </location>
</feature>
<feature type="helix" evidence="41">
    <location>
        <begin position="301"/>
        <end position="313"/>
    </location>
</feature>
<feature type="strand" evidence="41">
    <location>
        <begin position="320"/>
        <end position="322"/>
    </location>
</feature>
<feature type="helix" evidence="41">
    <location>
        <begin position="324"/>
        <end position="343"/>
    </location>
</feature>
<feature type="helix" evidence="41">
    <location>
        <begin position="352"/>
        <end position="363"/>
    </location>
</feature>
<feature type="strand" evidence="41">
    <location>
        <begin position="364"/>
        <end position="367"/>
    </location>
</feature>
<feature type="helix" evidence="41">
    <location>
        <begin position="370"/>
        <end position="381"/>
    </location>
</feature>
<feature type="helix" evidence="41">
    <location>
        <begin position="385"/>
        <end position="390"/>
    </location>
</feature>
<feature type="helix" evidence="41">
    <location>
        <begin position="393"/>
        <end position="395"/>
    </location>
</feature>
<feature type="helix" evidence="41">
    <location>
        <begin position="396"/>
        <end position="408"/>
    </location>
</feature>
<feature type="strand" evidence="41">
    <location>
        <begin position="413"/>
        <end position="415"/>
    </location>
</feature>
<feature type="helix" evidence="41">
    <location>
        <begin position="416"/>
        <end position="437"/>
    </location>
</feature>
<feature type="turn" evidence="41">
    <location>
        <begin position="444"/>
        <end position="446"/>
    </location>
</feature>
<feature type="helix" evidence="41">
    <location>
        <begin position="447"/>
        <end position="451"/>
    </location>
</feature>
<feature type="helix" evidence="41">
    <location>
        <begin position="456"/>
        <end position="472"/>
    </location>
</feature>
<comment type="function">
    <text evidence="13">The TFIID basal transcription factor complex plays a major role in the initiation of RNA polymerase II (Pol II)-dependent transcription (PubMed:33795473). TFIID recognizes and binds promoters with or without a TATA box via its subunit TBP, a TATA-box-binding protein, and promotes assembly of the pre-initiation complex (PIC) (PubMed:33795473). The TFIID complex consists of TBP and TBP-associated factors (TAFs), including TAF1, TAF2, TAF3, TAF4, TAF5, TAF6, TAF7, TAF8, TAF9, TAF10, TAF11, TAF12 and TAF13 (PubMed:33795473). The TFIID complex structure can be divided into 3 modules TFIID-A, TFIID-B, and TFIID-C (PubMed:33795473). TAF6 homodimer connects TFIID modules, forming a rigid core (PubMed:33795473).</text>
</comment>
<comment type="function">
    <molecule>Isoform 4</molecule>
    <text evidence="4 8 9 12">Transcriptional regulator which acts primarily as a positive regulator of transcription (PubMed:20096117, PubMed:29358700). Recruited to the promoters of a number of genes including GADD45A and CDKN1A/p21, leading to transcriptional up-regulation and subsequent induction of apoptosis (PubMed:11583621). Also up-regulates expression of other genes including GCNA/ACRC, HES1 and IFFO1 (PubMed:18628956). In contrast, down-regulates transcription of MDM2 (PubMed:11583621). Acts as a transcriptional coactivator to enhance transcription of TP53/p53-responsive genes such as DUSP1 (PubMed:20096117). Can also activate transcription and apoptosis independently of TP53 (PubMed:18628956). Drives apoptosis via the intrinsic apoptotic pathway by up-regulating apoptosis effectors such as BCL2L11/BIM and PMAIP1/NOXA (PubMed:29358700).</text>
</comment>
<comment type="subunit">
    <text evidence="5 6 7 13 14 15">Component of the TFIID basal transcription factor complex, composed of TATA-box-binding protein TBP, and a number of TBP-associated factors (TAFs), including TAF1, TAF2, TAF3, TAF4, TAF5, TAF6, TAF7, TAF8, TAF9, TAF10, TAF11, TAF12 and TAF13 (PubMed:33795473, PubMed:8262073). Interacts directly with TBP, TAF1/TAFII250, TAF9/TAFII31 and TAF12/TAFII20 (PubMed:7667268). The TAF6/TAFII70-TAF9/TAFII31 heterodimer forms an octamer complex with the TAF4B/TFII105-TAF12/TFIID20 heterodimer (PubMed:15601843). Component of some MLL1/MLL complex, at least composed of the core components KMT2A/MLL1, ASH2L, HCFC1/HCF1, WDR5 and RBBP5, as well as the facultative components BACC1, CHD8, E2F6, HSP70, INO80C, KANSL1, LAS1L, MAX, MCRS1, MGA, MYST1/MOF, PELP1, PHF20, PRP31, RING2, RUVB1/TIP49A, RUVB2/TIP49B, SENP3, TAF1, TAF4, TAF6, TAF7, TAF9 and TEX10 (PubMed:15960975). Also interacts with the GTFs, TFIIEalpha/GTF2E1 and TFIIFalpha/GTF2F1 (PubMed:7667268). Component of the TBP-free TAFII-histone acetylase complex (TFTC-HAT) (PubMed:12601814).</text>
</comment>
<comment type="subunit">
    <molecule>Isoform 1</molecule>
    <text evidence="9">Interacts with TP53/p53.</text>
</comment>
<comment type="subunit">
    <molecule>Isoform 4</molecule>
    <text evidence="4 9">Not part of the TBP-free TAFII-histone acetylase complex (TFTC-HAT) (PubMed:11583621). Part of a TFIID-like complex which lacks TAF9 (PubMed:11583621). Interacts with TP53/p53 (PubMed:20096117).</text>
</comment>
<comment type="interaction">
    <interactant intactId="EBI-1560206">
        <id>P49848</id>
    </interactant>
    <interactant intactId="EBI-6050669">
        <id>Q1K9H5</id>
        <label>PB1</label>
    </interactant>
    <organismsDiffer>true</organismsDiffer>
    <experiments>2</experiments>
</comment>
<comment type="interaction">
    <interactant intactId="EBI-12940148">
        <id>P49848-3</id>
    </interactant>
    <interactant intactId="EBI-11524452">
        <id>Q8N9N5-2</id>
        <label>BANP</label>
    </interactant>
    <organismsDiffer>false</organismsDiffer>
    <experiments>3</experiments>
</comment>
<comment type="interaction">
    <interactant intactId="EBI-12940148">
        <id>P49848-3</id>
    </interactant>
    <interactant intactId="EBI-10232538">
        <id>Q8WWB5</id>
        <label>PIH1D2</label>
    </interactant>
    <organismsDiffer>false</organismsDiffer>
    <experiments>3</experiments>
</comment>
<comment type="subcellular location">
    <subcellularLocation>
        <location>Nucleus</location>
    </subcellularLocation>
</comment>
<comment type="subcellular location">
    <molecule>Isoform 4</molecule>
    <subcellularLocation>
        <location evidence="8">Nucleus</location>
    </subcellularLocation>
</comment>
<comment type="alternative products">
    <event type="alternative splicing"/>
    <isoform>
        <id>P49848-1</id>
        <name>1</name>
        <name evidence="20">Alpha</name>
        <sequence type="displayed"/>
    </isoform>
    <isoform>
        <id>P49848-2</id>
        <name>2</name>
        <name evidence="20">Gamma</name>
        <sequence type="described" ref="VSP_037476"/>
    </isoform>
    <isoform>
        <id>P49848-3</id>
        <name>3</name>
        <sequence type="described" ref="VSP_043709"/>
    </isoform>
    <isoform>
        <id>P49848-4</id>
        <name>4</name>
        <name evidence="17 19">Delta</name>
        <sequence type="described" ref="VSP_059851"/>
    </isoform>
</comment>
<comment type="induction">
    <molecule>Isoform 4</molecule>
    <text evidence="4">Induced in cells undergoing apoptosis.</text>
</comment>
<comment type="PTM">
    <molecule>Isoform 4</molecule>
    <text evidence="4">In cells undergoing apoptosis, cleaved in a caspase-dependent manner to produce a 40 kDa product.</text>
</comment>
<comment type="disease" evidence="10 11">
    <disease id="DI-04825">
        <name>Alazami-Yuan syndrome</name>
        <acronym>ALYUS</acronym>
        <description>An autosomal recessive syndrome reminiscent of Cornelia de Lange syndrome and characterized by delayed psychomotor development with intellectual disability, hypotonia, microcephaly, short stature, poor speech, and dysmorphic features.</description>
        <dbReference type="MIM" id="617126"/>
    </disease>
    <text>The disease is caused by variants affecting the gene represented in this entry.</text>
</comment>
<comment type="similarity">
    <text evidence="21">Belongs to the TAF6 family.</text>
</comment>
<accession>P49848</accession>
<accession>A4D2B2</accession>
<accession>A4D2B3</accession>
<accession>B4DT11</accession>
<accession>D6W5U2</accession>
<accession>Q6AI29</accession>
<dbReference type="EMBL" id="L25444">
    <property type="protein sequence ID" value="AAA63643.1"/>
    <property type="molecule type" value="mRNA"/>
</dbReference>
<dbReference type="EMBL" id="U31659">
    <property type="protein sequence ID" value="AAA84390.1"/>
    <property type="molecule type" value="mRNA"/>
</dbReference>
<dbReference type="EMBL" id="AK300005">
    <property type="protein sequence ID" value="BAG61823.1"/>
    <property type="molecule type" value="mRNA"/>
</dbReference>
<dbReference type="EMBL" id="CR627390">
    <property type="protein sequence ID" value="CAH10485.1"/>
    <property type="molecule type" value="mRNA"/>
</dbReference>
<dbReference type="EMBL" id="AY149894">
    <property type="protein sequence ID" value="AAN10295.1"/>
    <property type="molecule type" value="Genomic_DNA"/>
</dbReference>
<dbReference type="EMBL" id="CH236956">
    <property type="protein sequence ID" value="EAL23851.1"/>
    <property type="molecule type" value="Genomic_DNA"/>
</dbReference>
<dbReference type="EMBL" id="CH236956">
    <property type="protein sequence ID" value="EAL23852.1"/>
    <property type="molecule type" value="Genomic_DNA"/>
</dbReference>
<dbReference type="EMBL" id="CH471091">
    <property type="protein sequence ID" value="EAW76589.1"/>
    <property type="molecule type" value="Genomic_DNA"/>
</dbReference>
<dbReference type="EMBL" id="CH471091">
    <property type="protein sequence ID" value="EAW76591.1"/>
    <property type="molecule type" value="Genomic_DNA"/>
</dbReference>
<dbReference type="EMBL" id="CH471091">
    <property type="protein sequence ID" value="EAW76592.1"/>
    <property type="molecule type" value="Genomic_DNA"/>
</dbReference>
<dbReference type="EMBL" id="BC018115">
    <property type="protein sequence ID" value="AAH18115.1"/>
    <property type="molecule type" value="mRNA"/>
</dbReference>
<dbReference type="CCDS" id="CCDS55135.1">
    <molecule id="P49848-3"/>
</dbReference>
<dbReference type="CCDS" id="CCDS5686.1">
    <molecule id="P49848-1"/>
</dbReference>
<dbReference type="CCDS" id="CCDS94153.1">
    <molecule id="P49848-4"/>
</dbReference>
<dbReference type="RefSeq" id="NP_001177344.1">
    <molecule id="P49848-3"/>
    <property type="nucleotide sequence ID" value="NM_001190415.2"/>
</dbReference>
<dbReference type="RefSeq" id="NP_001351927.1">
    <molecule id="P49848-1"/>
    <property type="nucleotide sequence ID" value="NM_001364998.1"/>
</dbReference>
<dbReference type="RefSeq" id="NP_001351928.1">
    <molecule id="P49848-1"/>
    <property type="nucleotide sequence ID" value="NM_001364999.1"/>
</dbReference>
<dbReference type="RefSeq" id="NP_001351929.1">
    <molecule id="P49848-4"/>
    <property type="nucleotide sequence ID" value="NM_001365000.1"/>
</dbReference>
<dbReference type="RefSeq" id="NP_001351930.1">
    <molecule id="P49848-4"/>
    <property type="nucleotide sequence ID" value="NM_001365001.1"/>
</dbReference>
<dbReference type="RefSeq" id="NP_001351931.1">
    <molecule id="P49848-4"/>
    <property type="nucleotide sequence ID" value="NM_001365002.1"/>
</dbReference>
<dbReference type="RefSeq" id="NP_001351932.1">
    <molecule id="P49848-4"/>
    <property type="nucleotide sequence ID" value="NM_001365003.1"/>
</dbReference>
<dbReference type="RefSeq" id="NP_005632.1">
    <molecule id="P49848-1"/>
    <property type="nucleotide sequence ID" value="NM_005641.4"/>
</dbReference>
<dbReference type="RefSeq" id="NP_647476.1">
    <molecule id="P49848-1"/>
    <property type="nucleotide sequence ID" value="NM_139315.3"/>
</dbReference>
<dbReference type="RefSeq" id="XP_006716163.1">
    <property type="nucleotide sequence ID" value="XM_006716100.2"/>
</dbReference>
<dbReference type="RefSeq" id="XP_011514845.1">
    <molecule id="P49848-4"/>
    <property type="nucleotide sequence ID" value="XM_011516543.4"/>
</dbReference>
<dbReference type="RefSeq" id="XP_024302664.1">
    <molecule id="P49848-1"/>
    <property type="nucleotide sequence ID" value="XM_024446896.2"/>
</dbReference>
<dbReference type="RefSeq" id="XP_024302668.1">
    <molecule id="P49848-1"/>
    <property type="nucleotide sequence ID" value="XM_024446900.2"/>
</dbReference>
<dbReference type="RefSeq" id="XP_047276735.1">
    <molecule id="P49848-1"/>
    <property type="nucleotide sequence ID" value="XM_047420779.1"/>
</dbReference>
<dbReference type="RefSeq" id="XP_047276736.1">
    <molecule id="P49848-4"/>
    <property type="nucleotide sequence ID" value="XM_047420780.1"/>
</dbReference>
<dbReference type="RefSeq" id="XP_047276737.1">
    <molecule id="P49848-4"/>
    <property type="nucleotide sequence ID" value="XM_047420781.1"/>
</dbReference>
<dbReference type="RefSeq" id="XP_054214873.1">
    <molecule id="P49848-1"/>
    <property type="nucleotide sequence ID" value="XM_054358898.1"/>
</dbReference>
<dbReference type="RefSeq" id="XP_054214874.1">
    <molecule id="P49848-4"/>
    <property type="nucleotide sequence ID" value="XM_054358899.1"/>
</dbReference>
<dbReference type="RefSeq" id="XP_054214875.1">
    <molecule id="P49848-1"/>
    <property type="nucleotide sequence ID" value="XM_054358900.1"/>
</dbReference>
<dbReference type="RefSeq" id="XP_054214876.1">
    <molecule id="P49848-4"/>
    <property type="nucleotide sequence ID" value="XM_054358901.1"/>
</dbReference>
<dbReference type="RefSeq" id="XP_054214878.1">
    <molecule id="P49848-1"/>
    <property type="nucleotide sequence ID" value="XM_054358903.1"/>
</dbReference>
<dbReference type="RefSeq" id="XP_054214879.1">
    <molecule id="P49848-4"/>
    <property type="nucleotide sequence ID" value="XM_054358904.1"/>
</dbReference>
<dbReference type="PDB" id="5FUR">
    <property type="method" value="EM"/>
    <property type="resolution" value="8.50 A"/>
    <property type="chains" value="J/K=1-677"/>
</dbReference>
<dbReference type="PDB" id="6F3T">
    <property type="method" value="X-ray"/>
    <property type="resolution" value="2.50 A"/>
    <property type="chains" value="E/G/I/K=5-92"/>
</dbReference>
<dbReference type="PDB" id="6MZC">
    <property type="method" value="EM"/>
    <property type="resolution" value="4.50 A"/>
    <property type="chains" value="H/I=1-677"/>
</dbReference>
<dbReference type="PDB" id="6MZD">
    <property type="method" value="EM"/>
    <property type="resolution" value="9.80 A"/>
    <property type="chains" value="H=1-677"/>
</dbReference>
<dbReference type="PDB" id="6MZL">
    <property type="method" value="EM"/>
    <property type="resolution" value="23.00 A"/>
    <property type="chains" value="H/I=1-677"/>
</dbReference>
<dbReference type="PDB" id="6MZM">
    <property type="method" value="EM"/>
    <property type="resolution" value="7.50 A"/>
    <property type="chains" value="H/I=1-677"/>
</dbReference>
<dbReference type="PDB" id="7EDX">
    <property type="method" value="EM"/>
    <property type="resolution" value="4.50 A"/>
    <property type="chains" value="F/f=1-677"/>
</dbReference>
<dbReference type="PDB" id="7EG7">
    <property type="method" value="EM"/>
    <property type="resolution" value="6.20 A"/>
    <property type="chains" value="F/f=1-677"/>
</dbReference>
<dbReference type="PDB" id="7EG8">
    <property type="method" value="EM"/>
    <property type="resolution" value="7.40 A"/>
    <property type="chains" value="F/f=1-677"/>
</dbReference>
<dbReference type="PDB" id="7EG9">
    <property type="method" value="EM"/>
    <property type="resolution" value="3.70 A"/>
    <property type="chains" value="F/f=1-677"/>
</dbReference>
<dbReference type="PDB" id="7EGA">
    <property type="method" value="EM"/>
    <property type="resolution" value="4.10 A"/>
    <property type="chains" value="F/f=1-677"/>
</dbReference>
<dbReference type="PDB" id="7EGB">
    <property type="method" value="EM"/>
    <property type="resolution" value="3.30 A"/>
    <property type="chains" value="F/f=1-677"/>
</dbReference>
<dbReference type="PDB" id="7EGC">
    <property type="method" value="EM"/>
    <property type="resolution" value="3.90 A"/>
    <property type="chains" value="F/f=1-677"/>
</dbReference>
<dbReference type="PDB" id="7EGD">
    <property type="method" value="EM"/>
    <property type="resolution" value="6.75 A"/>
    <property type="chains" value="F/f=1-677"/>
</dbReference>
<dbReference type="PDB" id="7EGE">
    <property type="method" value="EM"/>
    <property type="resolution" value="9.00 A"/>
    <property type="chains" value="F/f=1-677"/>
</dbReference>
<dbReference type="PDB" id="7EGF">
    <property type="method" value="EM"/>
    <property type="resolution" value="3.16 A"/>
    <property type="chains" value="f=1-677"/>
</dbReference>
<dbReference type="PDB" id="7EGG">
    <property type="method" value="EM"/>
    <property type="resolution" value="2.77 A"/>
    <property type="chains" value="F=1-677"/>
</dbReference>
<dbReference type="PDB" id="7EGH">
    <property type="method" value="EM"/>
    <property type="resolution" value="3.04 A"/>
    <property type="chains" value="F/f=1-677"/>
</dbReference>
<dbReference type="PDB" id="7EGI">
    <property type="method" value="EM"/>
    <property type="resolution" value="9.82 A"/>
    <property type="chains" value="F/f=1-677"/>
</dbReference>
<dbReference type="PDB" id="7EGJ">
    <property type="method" value="EM"/>
    <property type="resolution" value="8.64 A"/>
    <property type="chains" value="F/f=1-677"/>
</dbReference>
<dbReference type="PDB" id="7ENA">
    <property type="method" value="EM"/>
    <property type="resolution" value="4.07 A"/>
    <property type="chains" value="DF/Df=1-677"/>
</dbReference>
<dbReference type="PDB" id="7ENC">
    <property type="method" value="EM"/>
    <property type="resolution" value="4.13 A"/>
    <property type="chains" value="DF/Df=1-677"/>
</dbReference>
<dbReference type="PDB" id="8GXQ">
    <property type="method" value="EM"/>
    <property type="resolution" value="5.04 A"/>
    <property type="chains" value="DF/Df=1-677"/>
</dbReference>
<dbReference type="PDB" id="8GXS">
    <property type="method" value="EM"/>
    <property type="resolution" value="4.16 A"/>
    <property type="chains" value="DF/Df=1-677"/>
</dbReference>
<dbReference type="PDB" id="8WAK">
    <property type="method" value="EM"/>
    <property type="resolution" value="5.47 A"/>
    <property type="chains" value="F/f=1-677"/>
</dbReference>
<dbReference type="PDB" id="8WAL">
    <property type="method" value="EM"/>
    <property type="resolution" value="8.52 A"/>
    <property type="chains" value="F/f=1-677"/>
</dbReference>
<dbReference type="PDB" id="8WAN">
    <property type="method" value="EM"/>
    <property type="resolution" value="6.07 A"/>
    <property type="chains" value="F/f=1-677"/>
</dbReference>
<dbReference type="PDB" id="8WAO">
    <property type="method" value="EM"/>
    <property type="resolution" value="6.40 A"/>
    <property type="chains" value="F/f=1-677"/>
</dbReference>
<dbReference type="PDB" id="8WAP">
    <property type="method" value="EM"/>
    <property type="resolution" value="5.85 A"/>
    <property type="chains" value="F/f=1-677"/>
</dbReference>
<dbReference type="PDB" id="8WAQ">
    <property type="method" value="EM"/>
    <property type="resolution" value="6.29 A"/>
    <property type="chains" value="F/f=1-677"/>
</dbReference>
<dbReference type="PDB" id="8WAR">
    <property type="method" value="EM"/>
    <property type="resolution" value="7.20 A"/>
    <property type="chains" value="F/f=1-677"/>
</dbReference>
<dbReference type="PDB" id="8WAS">
    <property type="method" value="EM"/>
    <property type="resolution" value="6.13 A"/>
    <property type="chains" value="F/f=1-677"/>
</dbReference>
<dbReference type="PDBsum" id="5FUR"/>
<dbReference type="PDBsum" id="6F3T"/>
<dbReference type="PDBsum" id="6MZC"/>
<dbReference type="PDBsum" id="6MZD"/>
<dbReference type="PDBsum" id="6MZL"/>
<dbReference type="PDBsum" id="6MZM"/>
<dbReference type="PDBsum" id="7EDX"/>
<dbReference type="PDBsum" id="7EG7"/>
<dbReference type="PDBsum" id="7EG8"/>
<dbReference type="PDBsum" id="7EG9"/>
<dbReference type="PDBsum" id="7EGA"/>
<dbReference type="PDBsum" id="7EGB"/>
<dbReference type="PDBsum" id="7EGC"/>
<dbReference type="PDBsum" id="7EGD"/>
<dbReference type="PDBsum" id="7EGE"/>
<dbReference type="PDBsum" id="7EGF"/>
<dbReference type="PDBsum" id="7EGG"/>
<dbReference type="PDBsum" id="7EGH"/>
<dbReference type="PDBsum" id="7EGI"/>
<dbReference type="PDBsum" id="7EGJ"/>
<dbReference type="PDBsum" id="7ENA"/>
<dbReference type="PDBsum" id="7ENC"/>
<dbReference type="PDBsum" id="8GXQ"/>
<dbReference type="PDBsum" id="8GXS"/>
<dbReference type="PDBsum" id="8WAK"/>
<dbReference type="PDBsum" id="8WAL"/>
<dbReference type="PDBsum" id="8WAN"/>
<dbReference type="PDBsum" id="8WAO"/>
<dbReference type="PDBsum" id="8WAP"/>
<dbReference type="PDBsum" id="8WAQ"/>
<dbReference type="PDBsum" id="8WAR"/>
<dbReference type="PDBsum" id="8WAS"/>
<dbReference type="EMDB" id="EMD-31075"/>
<dbReference type="EMDB" id="EMD-31107"/>
<dbReference type="EMDB" id="EMD-31108"/>
<dbReference type="EMDB" id="EMD-31109"/>
<dbReference type="EMDB" id="EMD-31110"/>
<dbReference type="EMDB" id="EMD-31111"/>
<dbReference type="EMDB" id="EMD-31112"/>
<dbReference type="EMDB" id="EMD-31113"/>
<dbReference type="EMDB" id="EMD-31114"/>
<dbReference type="EMDB" id="EMD-31115"/>
<dbReference type="EMDB" id="EMD-31116"/>
<dbReference type="EMDB" id="EMD-31117"/>
<dbReference type="EMDB" id="EMD-31118"/>
<dbReference type="EMDB" id="EMD-31119"/>
<dbReference type="EMDB" id="EMD-31204"/>
<dbReference type="EMDB" id="EMD-31207"/>
<dbReference type="EMDB" id="EMD-34359"/>
<dbReference type="EMDB" id="EMD-34360"/>
<dbReference type="EMDB" id="EMD-37395"/>
<dbReference type="EMDB" id="EMD-37396"/>
<dbReference type="EMDB" id="EMD-37398"/>
<dbReference type="EMDB" id="EMD-37399"/>
<dbReference type="EMDB" id="EMD-37400"/>
<dbReference type="EMDB" id="EMD-37401"/>
<dbReference type="EMDB" id="EMD-37402"/>
<dbReference type="EMDB" id="EMD-37403"/>
<dbReference type="EMDB" id="EMD-9298"/>
<dbReference type="EMDB" id="EMD-9302"/>
<dbReference type="EMDB" id="EMD-9305"/>
<dbReference type="EMDB" id="EMD-9306"/>
<dbReference type="SMR" id="P49848"/>
<dbReference type="BioGRID" id="112741">
    <property type="interactions" value="244"/>
</dbReference>
<dbReference type="ComplexPortal" id="CPX-903">
    <property type="entry name" value="TFTC histone acetylation complex"/>
</dbReference>
<dbReference type="ComplexPortal" id="CPX-915">
    <property type="entry name" value="General transcription factor complex TFIID"/>
</dbReference>
<dbReference type="ComplexPortal" id="CPX-930">
    <property type="entry name" value="General transcription factor complex TFIID, TAF4B variant"/>
</dbReference>
<dbReference type="CORUM" id="P49848"/>
<dbReference type="DIP" id="DIP-773N"/>
<dbReference type="FunCoup" id="P49848">
    <property type="interactions" value="2593"/>
</dbReference>
<dbReference type="IntAct" id="P49848">
    <property type="interactions" value="72"/>
</dbReference>
<dbReference type="MINT" id="P49848"/>
<dbReference type="STRING" id="9606.ENSP00000399982"/>
<dbReference type="ChEMBL" id="CHEMBL5465548"/>
<dbReference type="GlyCosmos" id="P49848">
    <property type="glycosylation" value="15 sites, 2 glycans"/>
</dbReference>
<dbReference type="GlyGen" id="P49848">
    <property type="glycosylation" value="18 sites, 2 O-linked glycans (18 sites)"/>
</dbReference>
<dbReference type="iPTMnet" id="P49848"/>
<dbReference type="MetOSite" id="P49848"/>
<dbReference type="PhosphoSitePlus" id="P49848"/>
<dbReference type="BioMuta" id="TAF6"/>
<dbReference type="DMDM" id="1729810"/>
<dbReference type="jPOST" id="P49848"/>
<dbReference type="MassIVE" id="P49848"/>
<dbReference type="PaxDb" id="9606-ENSP00000399982"/>
<dbReference type="PeptideAtlas" id="P49848"/>
<dbReference type="ProteomicsDB" id="56157">
    <molecule id="P49848-1"/>
</dbReference>
<dbReference type="ProteomicsDB" id="56158">
    <molecule id="P49848-2"/>
</dbReference>
<dbReference type="ProteomicsDB" id="56159">
    <molecule id="P49848-3"/>
</dbReference>
<dbReference type="Pumba" id="P49848"/>
<dbReference type="Antibodypedia" id="1765">
    <property type="antibodies" value="200 antibodies from 23 providers"/>
</dbReference>
<dbReference type="DNASU" id="6878"/>
<dbReference type="Ensembl" id="ENST00000344095.8">
    <molecule id="P49848-1"/>
    <property type="protein sequence ID" value="ENSP00000344537.4"/>
    <property type="gene ID" value="ENSG00000106290.16"/>
</dbReference>
<dbReference type="Ensembl" id="ENST00000437822.6">
    <molecule id="P49848-3"/>
    <property type="protein sequence ID" value="ENSP00000399982.2"/>
    <property type="gene ID" value="ENSG00000106290.16"/>
</dbReference>
<dbReference type="Ensembl" id="ENST00000452041.5">
    <molecule id="P49848-1"/>
    <property type="protein sequence ID" value="ENSP00000416396.1"/>
    <property type="gene ID" value="ENSG00000106290.16"/>
</dbReference>
<dbReference type="Ensembl" id="ENST00000453269.7">
    <molecule id="P49848-1"/>
    <property type="protein sequence ID" value="ENSP00000389575.2"/>
    <property type="gene ID" value="ENSG00000106290.16"/>
</dbReference>
<dbReference type="Ensembl" id="ENST00000460673.3">
    <molecule id="P49848-1"/>
    <property type="protein sequence ID" value="ENSP00000427710.3"/>
    <property type="gene ID" value="ENSG00000106290.16"/>
</dbReference>
<dbReference type="Ensembl" id="ENST00000472509.6">
    <molecule id="P49848-1"/>
    <property type="protein sequence ID" value="ENSP00000419760.2"/>
    <property type="gene ID" value="ENSG00000106290.16"/>
</dbReference>
<dbReference type="Ensembl" id="ENST00000685280.1">
    <molecule id="P49848-1"/>
    <property type="protein sequence ID" value="ENSP00000510209.1"/>
    <property type="gene ID" value="ENSG00000106290.16"/>
</dbReference>
<dbReference type="Ensembl" id="ENST00000686172.1">
    <molecule id="P49848-4"/>
    <property type="protein sequence ID" value="ENSP00000510809.1"/>
    <property type="gene ID" value="ENSG00000106290.16"/>
</dbReference>
<dbReference type="Ensembl" id="ENST00000686580.1">
    <molecule id="P49848-1"/>
    <property type="protein sequence ID" value="ENSP00000510270.1"/>
    <property type="gene ID" value="ENSG00000106290.16"/>
</dbReference>
<dbReference type="Ensembl" id="ENST00000686777.1">
    <molecule id="P49848-1"/>
    <property type="protein sequence ID" value="ENSP00000510166.1"/>
    <property type="gene ID" value="ENSG00000106290.16"/>
</dbReference>
<dbReference type="Ensembl" id="ENST00000687137.1">
    <molecule id="P49848-1"/>
    <property type="protein sequence ID" value="ENSP00000508432.1"/>
    <property type="gene ID" value="ENSG00000106290.16"/>
</dbReference>
<dbReference type="Ensembl" id="ENST00000687151.1">
    <molecule id="P49848-4"/>
    <property type="protein sequence ID" value="ENSP00000508852.1"/>
    <property type="gene ID" value="ENSG00000106290.16"/>
</dbReference>
<dbReference type="Ensembl" id="ENST00000687410.1">
    <molecule id="P49848-1"/>
    <property type="protein sequence ID" value="ENSP00000509158.1"/>
    <property type="gene ID" value="ENSG00000106290.16"/>
</dbReference>
<dbReference type="Ensembl" id="ENST00000687447.1">
    <molecule id="P49848-1"/>
    <property type="protein sequence ID" value="ENSP00000510217.1"/>
    <property type="gene ID" value="ENSG00000106290.16"/>
</dbReference>
<dbReference type="Ensembl" id="ENST00000687672.1">
    <molecule id="P49848-4"/>
    <property type="protein sequence ID" value="ENSP00000509741.1"/>
    <property type="gene ID" value="ENSG00000106290.16"/>
</dbReference>
<dbReference type="Ensembl" id="ENST00000687969.1">
    <molecule id="P49848-1"/>
    <property type="protein sequence ID" value="ENSP00000508679.1"/>
    <property type="gene ID" value="ENSG00000106290.16"/>
</dbReference>
<dbReference type="Ensembl" id="ENST00000688343.1">
    <molecule id="P49848-1"/>
    <property type="protein sequence ID" value="ENSP00000508691.1"/>
    <property type="gene ID" value="ENSG00000106290.16"/>
</dbReference>
<dbReference type="Ensembl" id="ENST00000688498.1">
    <molecule id="P49848-1"/>
    <property type="protein sequence ID" value="ENSP00000510409.1"/>
    <property type="gene ID" value="ENSG00000106290.16"/>
</dbReference>
<dbReference type="Ensembl" id="ENST00000688640.1">
    <molecule id="P49848-1"/>
    <property type="protein sequence ID" value="ENSP00000509783.1"/>
    <property type="gene ID" value="ENSG00000106290.16"/>
</dbReference>
<dbReference type="Ensembl" id="ENST00000689754.1">
    <molecule id="P49848-1"/>
    <property type="protein sequence ID" value="ENSP00000509866.1"/>
    <property type="gene ID" value="ENSG00000106290.16"/>
</dbReference>
<dbReference type="Ensembl" id="ENST00000690367.1">
    <molecule id="P49848-4"/>
    <property type="protein sequence ID" value="ENSP00000509821.1"/>
    <property type="gene ID" value="ENSG00000106290.16"/>
</dbReference>
<dbReference type="Ensembl" id="ENST00000691010.1">
    <molecule id="P49848-4"/>
    <property type="protein sequence ID" value="ENSP00000509320.1"/>
    <property type="gene ID" value="ENSG00000106290.16"/>
</dbReference>
<dbReference type="Ensembl" id="ENST00000691370.1">
    <molecule id="P49848-1"/>
    <property type="protein sequence ID" value="ENSP00000509500.1"/>
    <property type="gene ID" value="ENSG00000106290.16"/>
</dbReference>
<dbReference type="Ensembl" id="ENST00000691681.1">
    <molecule id="P49848-1"/>
    <property type="protein sequence ID" value="ENSP00000509494.1"/>
    <property type="gene ID" value="ENSG00000106290.16"/>
</dbReference>
<dbReference type="Ensembl" id="ENST00000692408.1">
    <molecule id="P49848-4"/>
    <property type="protein sequence ID" value="ENSP00000508788.1"/>
    <property type="gene ID" value="ENSG00000106290.16"/>
</dbReference>
<dbReference type="Ensembl" id="ENST00000692466.1">
    <molecule id="P49848-1"/>
    <property type="protein sequence ID" value="ENSP00000509041.1"/>
    <property type="gene ID" value="ENSG00000106290.16"/>
</dbReference>
<dbReference type="Ensembl" id="ENST00000692927.1">
    <molecule id="P49848-1"/>
    <property type="protein sequence ID" value="ENSP00000509335.1"/>
    <property type="gene ID" value="ENSG00000106290.16"/>
</dbReference>
<dbReference type="GeneID" id="6878"/>
<dbReference type="KEGG" id="hsa:6878"/>
<dbReference type="MANE-Select" id="ENST00000453269.7">
    <property type="protein sequence ID" value="ENSP00000389575.2"/>
    <property type="RefSeq nucleotide sequence ID" value="NM_139315.3"/>
    <property type="RefSeq protein sequence ID" value="NP_647476.1"/>
</dbReference>
<dbReference type="UCSC" id="uc003uti.4">
    <molecule id="P49848-1"/>
    <property type="organism name" value="human"/>
</dbReference>
<dbReference type="AGR" id="HGNC:11540"/>
<dbReference type="CTD" id="6878"/>
<dbReference type="DisGeNET" id="6878"/>
<dbReference type="GeneCards" id="TAF6"/>
<dbReference type="HGNC" id="HGNC:11540">
    <property type="gene designation" value="TAF6"/>
</dbReference>
<dbReference type="HPA" id="ENSG00000106290">
    <property type="expression patterns" value="Low tissue specificity"/>
</dbReference>
<dbReference type="MalaCards" id="TAF6"/>
<dbReference type="MIM" id="602955">
    <property type="type" value="gene"/>
</dbReference>
<dbReference type="MIM" id="617126">
    <property type="type" value="phenotype"/>
</dbReference>
<dbReference type="neXtProt" id="NX_P49848"/>
<dbReference type="OpenTargets" id="ENSG00000106290"/>
<dbReference type="Orphanet" id="199">
    <property type="disease" value="Cornelia de Lange syndrome"/>
</dbReference>
<dbReference type="PharmGKB" id="PA36315"/>
<dbReference type="VEuPathDB" id="HostDB:ENSG00000106290"/>
<dbReference type="eggNOG" id="KOG2549">
    <property type="taxonomic scope" value="Eukaryota"/>
</dbReference>
<dbReference type="GeneTree" id="ENSGT00640000091486"/>
<dbReference type="HOGENOM" id="CLU_021711_2_1_1"/>
<dbReference type="InParanoid" id="P49848"/>
<dbReference type="OMA" id="MPEETCQ"/>
<dbReference type="OrthoDB" id="361039at2759"/>
<dbReference type="PAN-GO" id="P49848">
    <property type="GO annotations" value="4 GO annotations based on evolutionary models"/>
</dbReference>
<dbReference type="PhylomeDB" id="P49848"/>
<dbReference type="TreeFam" id="TF313632"/>
<dbReference type="PathwayCommons" id="P49848"/>
<dbReference type="Reactome" id="R-HSA-167161">
    <property type="pathway name" value="HIV Transcription Initiation"/>
</dbReference>
<dbReference type="Reactome" id="R-HSA-167162">
    <property type="pathway name" value="RNA Polymerase II HIV Promoter Escape"/>
</dbReference>
<dbReference type="Reactome" id="R-HSA-167172">
    <property type="pathway name" value="Transcription of the HIV genome"/>
</dbReference>
<dbReference type="Reactome" id="R-HSA-674695">
    <property type="pathway name" value="RNA Polymerase II Pre-transcription Events"/>
</dbReference>
<dbReference type="Reactome" id="R-HSA-6804756">
    <property type="pathway name" value="Regulation of TP53 Activity through Phosphorylation"/>
</dbReference>
<dbReference type="Reactome" id="R-HSA-6807505">
    <property type="pathway name" value="RNA polymerase II transcribes snRNA genes"/>
</dbReference>
<dbReference type="Reactome" id="R-HSA-73776">
    <property type="pathway name" value="RNA Polymerase II Promoter Escape"/>
</dbReference>
<dbReference type="Reactome" id="R-HSA-73779">
    <property type="pathway name" value="RNA Polymerase II Transcription Pre-Initiation And Promoter Opening"/>
</dbReference>
<dbReference type="Reactome" id="R-HSA-75953">
    <property type="pathway name" value="RNA Polymerase II Transcription Initiation"/>
</dbReference>
<dbReference type="Reactome" id="R-HSA-76042">
    <property type="pathway name" value="RNA Polymerase II Transcription Initiation And Promoter Clearance"/>
</dbReference>
<dbReference type="SignaLink" id="P49848"/>
<dbReference type="SIGNOR" id="P49848"/>
<dbReference type="BioGRID-ORCS" id="6878">
    <property type="hits" value="733 hits in 1143 CRISPR screens"/>
</dbReference>
<dbReference type="ChiTaRS" id="TAF6">
    <property type="organism name" value="human"/>
</dbReference>
<dbReference type="GeneWiki" id="TAF6"/>
<dbReference type="GenomeRNAi" id="6878"/>
<dbReference type="Pharos" id="P49848">
    <property type="development level" value="Tbio"/>
</dbReference>
<dbReference type="PRO" id="PR:P49848"/>
<dbReference type="Proteomes" id="UP000005640">
    <property type="component" value="Chromosome 7"/>
</dbReference>
<dbReference type="RNAct" id="P49848">
    <property type="molecule type" value="protein"/>
</dbReference>
<dbReference type="Bgee" id="ENSG00000106290">
    <property type="expression patterns" value="Expressed in stromal cell of endometrium and 206 other cell types or tissues"/>
</dbReference>
<dbReference type="ExpressionAtlas" id="P49848">
    <property type="expression patterns" value="baseline and differential"/>
</dbReference>
<dbReference type="GO" id="GO:0005829">
    <property type="term" value="C:cytosol"/>
    <property type="evidence" value="ECO:0000314"/>
    <property type="project" value="HPA"/>
</dbReference>
<dbReference type="GO" id="GO:0071339">
    <property type="term" value="C:MLL1 complex"/>
    <property type="evidence" value="ECO:0000314"/>
    <property type="project" value="UniProtKB"/>
</dbReference>
<dbReference type="GO" id="GO:0005654">
    <property type="term" value="C:nucleoplasm"/>
    <property type="evidence" value="ECO:0000314"/>
    <property type="project" value="HPA"/>
</dbReference>
<dbReference type="GO" id="GO:0005634">
    <property type="term" value="C:nucleus"/>
    <property type="evidence" value="ECO:0000314"/>
    <property type="project" value="UniProtKB"/>
</dbReference>
<dbReference type="GO" id="GO:0032991">
    <property type="term" value="C:protein-containing complex"/>
    <property type="evidence" value="ECO:0000315"/>
    <property type="project" value="CAFA"/>
</dbReference>
<dbReference type="GO" id="GO:0000124">
    <property type="term" value="C:SAGA complex"/>
    <property type="evidence" value="ECO:0007669"/>
    <property type="project" value="InterPro"/>
</dbReference>
<dbReference type="GO" id="GO:0046695">
    <property type="term" value="C:SLIK (SAGA-like) complex"/>
    <property type="evidence" value="ECO:0007669"/>
    <property type="project" value="InterPro"/>
</dbReference>
<dbReference type="GO" id="GO:0005669">
    <property type="term" value="C:transcription factor TFIID complex"/>
    <property type="evidence" value="ECO:0000314"/>
    <property type="project" value="UniProtKB"/>
</dbReference>
<dbReference type="GO" id="GO:0033276">
    <property type="term" value="C:transcription factor TFTC complex"/>
    <property type="evidence" value="ECO:0000314"/>
    <property type="project" value="UniProtKB"/>
</dbReference>
<dbReference type="GO" id="GO:0017162">
    <property type="term" value="F:aryl hydrocarbon receptor binding"/>
    <property type="evidence" value="ECO:0000353"/>
    <property type="project" value="CAFA"/>
</dbReference>
<dbReference type="GO" id="GO:0003677">
    <property type="term" value="F:DNA binding"/>
    <property type="evidence" value="ECO:0000314"/>
    <property type="project" value="UniProtKB"/>
</dbReference>
<dbReference type="GO" id="GO:0046982">
    <property type="term" value="F:protein heterodimerization activity"/>
    <property type="evidence" value="ECO:0007669"/>
    <property type="project" value="InterPro"/>
</dbReference>
<dbReference type="GO" id="GO:0016251">
    <property type="term" value="F:RNA polymerase II general transcription initiation factor activity"/>
    <property type="evidence" value="ECO:0000314"/>
    <property type="project" value="GO_Central"/>
</dbReference>
<dbReference type="GO" id="GO:0003713">
    <property type="term" value="F:transcription coactivator activity"/>
    <property type="evidence" value="ECO:0000318"/>
    <property type="project" value="GO_Central"/>
</dbReference>
<dbReference type="GO" id="GO:0006915">
    <property type="term" value="P:apoptotic process"/>
    <property type="evidence" value="ECO:0007669"/>
    <property type="project" value="UniProtKB-KW"/>
</dbReference>
<dbReference type="GO" id="GO:0006352">
    <property type="term" value="P:DNA-templated transcription initiation"/>
    <property type="evidence" value="ECO:0000314"/>
    <property type="project" value="UniProtKB"/>
</dbReference>
<dbReference type="GO" id="GO:0042789">
    <property type="term" value="P:mRNA transcription by RNA polymerase II"/>
    <property type="evidence" value="ECO:0000314"/>
    <property type="project" value="ComplexPortal"/>
</dbReference>
<dbReference type="GO" id="GO:0045786">
    <property type="term" value="P:negative regulation of cell cycle"/>
    <property type="evidence" value="ECO:0000314"/>
    <property type="project" value="UniProtKB"/>
</dbReference>
<dbReference type="GO" id="GO:0008285">
    <property type="term" value="P:negative regulation of cell population proliferation"/>
    <property type="evidence" value="ECO:0000314"/>
    <property type="project" value="UniProtKB"/>
</dbReference>
<dbReference type="GO" id="GO:0043065">
    <property type="term" value="P:positive regulation of apoptotic process"/>
    <property type="evidence" value="ECO:0000314"/>
    <property type="project" value="UniProtKB"/>
</dbReference>
<dbReference type="GO" id="GO:0045893">
    <property type="term" value="P:positive regulation of DNA-templated transcription"/>
    <property type="evidence" value="ECO:0000303"/>
    <property type="project" value="ComplexPortal"/>
</dbReference>
<dbReference type="GO" id="GO:2001244">
    <property type="term" value="P:positive regulation of intrinsic apoptotic signaling pathway"/>
    <property type="evidence" value="ECO:0000314"/>
    <property type="project" value="UniProtKB"/>
</dbReference>
<dbReference type="GO" id="GO:0060261">
    <property type="term" value="P:positive regulation of transcription initiation by RNA polymerase II"/>
    <property type="evidence" value="ECO:0000314"/>
    <property type="project" value="UniProtKB"/>
</dbReference>
<dbReference type="GO" id="GO:0006282">
    <property type="term" value="P:regulation of DNA repair"/>
    <property type="evidence" value="ECO:0000303"/>
    <property type="project" value="ComplexPortal"/>
</dbReference>
<dbReference type="GO" id="GO:0006357">
    <property type="term" value="P:regulation of transcription by RNA polymerase II"/>
    <property type="evidence" value="ECO:0000314"/>
    <property type="project" value="ComplexPortal"/>
</dbReference>
<dbReference type="GO" id="GO:0051123">
    <property type="term" value="P:RNA polymerase II preinitiation complex assembly"/>
    <property type="evidence" value="ECO:0000353"/>
    <property type="project" value="ComplexPortal"/>
</dbReference>
<dbReference type="GO" id="GO:0006366">
    <property type="term" value="P:transcription by RNA polymerase II"/>
    <property type="evidence" value="ECO:0000303"/>
    <property type="project" value="UniProtKB"/>
</dbReference>
<dbReference type="GO" id="GO:0006367">
    <property type="term" value="P:transcription initiation at RNA polymerase II promoter"/>
    <property type="evidence" value="ECO:0000314"/>
    <property type="project" value="UniProtKB"/>
</dbReference>
<dbReference type="CDD" id="cd22931">
    <property type="entry name" value="HFD_TAF6"/>
    <property type="match status" value="1"/>
</dbReference>
<dbReference type="CDD" id="cd08050">
    <property type="entry name" value="TAF6C"/>
    <property type="match status" value="1"/>
</dbReference>
<dbReference type="DisProt" id="DP01262"/>
<dbReference type="FunFam" id="1.10.20.10:FF:000030">
    <property type="entry name" value="Transcription initiation factor TFIID subunit 6"/>
    <property type="match status" value="1"/>
</dbReference>
<dbReference type="FunFam" id="1.25.40.770:FF:000001">
    <property type="entry name" value="Transcription initiation factor TFIID subunit 6"/>
    <property type="match status" value="1"/>
</dbReference>
<dbReference type="Gene3D" id="1.10.20.10">
    <property type="entry name" value="Histone, subunit A"/>
    <property type="match status" value="1"/>
</dbReference>
<dbReference type="Gene3D" id="1.25.40.770">
    <property type="entry name" value="TAF6, C-terminal HEAT repeat domain"/>
    <property type="match status" value="1"/>
</dbReference>
<dbReference type="InterPro" id="IPR016024">
    <property type="entry name" value="ARM-type_fold"/>
</dbReference>
<dbReference type="InterPro" id="IPR009072">
    <property type="entry name" value="Histone-fold"/>
</dbReference>
<dbReference type="InterPro" id="IPR037796">
    <property type="entry name" value="TAF6"/>
</dbReference>
<dbReference type="InterPro" id="IPR011442">
    <property type="entry name" value="TAF6_C"/>
</dbReference>
<dbReference type="InterPro" id="IPR046344">
    <property type="entry name" value="TAF6_C_sf"/>
</dbReference>
<dbReference type="InterPro" id="IPR004823">
    <property type="entry name" value="TAF_TATA-bd_Histone-like_dom"/>
</dbReference>
<dbReference type="PANTHER" id="PTHR10221">
    <property type="entry name" value="TRANSCRIPTION INITIATION FACTOR TFIID SUBUNIT 6"/>
    <property type="match status" value="1"/>
</dbReference>
<dbReference type="PANTHER" id="PTHR10221:SF9">
    <property type="entry name" value="TRANSCRIPTION INITIATION FACTOR TFIID SUBUNIT 6"/>
    <property type="match status" value="1"/>
</dbReference>
<dbReference type="Pfam" id="PF02969">
    <property type="entry name" value="TAF"/>
    <property type="match status" value="1"/>
</dbReference>
<dbReference type="Pfam" id="PF07571">
    <property type="entry name" value="TAF6_C"/>
    <property type="match status" value="1"/>
</dbReference>
<dbReference type="SMART" id="SM00803">
    <property type="entry name" value="TAF"/>
    <property type="match status" value="1"/>
</dbReference>
<dbReference type="SUPFAM" id="SSF48371">
    <property type="entry name" value="ARM repeat"/>
    <property type="match status" value="1"/>
</dbReference>
<dbReference type="SUPFAM" id="SSF47113">
    <property type="entry name" value="Histone-fold"/>
    <property type="match status" value="1"/>
</dbReference>
<sequence length="677" mass="72668">MAEEKKLKLSNTVLPSESMKVVAESMGIAQIQEETCQLLTDEVSYRIKEIAQDALKFMHMGKRQKLTTSDIDYALKLKNVEPLYGFHAQEFIPFRFASGGGRELYFYEEKEVDLSDIINTPLPRVPLDVCLKAHWLSIEGCQPAIPENPPPAPKEQQKAEATEPLKSAKPGQEEDGPLKGKGQGATTADGKGKEKKAPPLLEGAPLRLKPRSIHELSVEQQLYYKEITEACVGSCEAKRAEALQSIATDPGLYQMLPRFSTFISEGVRVNVVQNNLALLIYLMRMVKALMDNPTLYLEKYVHELIPAVMTCIVSRQLCLRPDVDNHWALRDFAARLVAQICKHFSTTTNNIQSRITKTFTKSWVDEKTPWTTRYGSIAGLAELGHDVIKTLILPRLQQEGERIRSVLDGPVLSNIDRIGADHVQSLLLKHCAPVLAKLRPPPDNQDAYRAEFGSLGPLLCSQVVKARAQAALQAQQVNRTTLTITQPRPTLTLSQAPQPGPRTPGLLKVPGSIALPVQTLVSARAAAPPQPSPPPTKFIVMSSSSSAPSTQQVLSLSTSAPGSGSTTTSPVTTTVPSVQPIVKLVSTATTAPPSTAPSGPGSVQKYIVVSLPPTGEGKGGPTSHPSPVPPPASSPSPLSGSALCGGKQEAGDSPPPAPGTPKANGSQPNSGSPQPAP</sequence>
<keyword id="KW-0002">3D-structure</keyword>
<keyword id="KW-0025">Alternative splicing</keyword>
<keyword id="KW-0053">Apoptosis</keyword>
<keyword id="KW-0903">Direct protein sequencing</keyword>
<keyword id="KW-0225">Disease variant</keyword>
<keyword id="KW-0991">Intellectual disability</keyword>
<keyword id="KW-1017">Isopeptide bond</keyword>
<keyword id="KW-0488">Methylation</keyword>
<keyword id="KW-0539">Nucleus</keyword>
<keyword id="KW-0597">Phosphoprotein</keyword>
<keyword id="KW-1267">Proteomics identification</keyword>
<keyword id="KW-1185">Reference proteome</keyword>
<keyword id="KW-0804">Transcription</keyword>
<keyword id="KW-0805">Transcription regulation</keyword>
<keyword id="KW-0832">Ubl conjugation</keyword>
<organism>
    <name type="scientific">Homo sapiens</name>
    <name type="common">Human</name>
    <dbReference type="NCBI Taxonomy" id="9606"/>
    <lineage>
        <taxon>Eukaryota</taxon>
        <taxon>Metazoa</taxon>
        <taxon>Chordata</taxon>
        <taxon>Craniata</taxon>
        <taxon>Vertebrata</taxon>
        <taxon>Euteleostomi</taxon>
        <taxon>Mammalia</taxon>
        <taxon>Eutheria</taxon>
        <taxon>Euarchontoglires</taxon>
        <taxon>Primates</taxon>
        <taxon>Haplorrhini</taxon>
        <taxon>Catarrhini</taxon>
        <taxon>Hominidae</taxon>
        <taxon>Homo</taxon>
    </lineage>
</organism>
<protein>
    <recommendedName>
        <fullName>Transcription initiation factor TFIID subunit 6</fullName>
    </recommendedName>
    <alternativeName>
        <fullName>RNA polymerase II TBP-associated factor subunit E</fullName>
    </alternativeName>
    <alternativeName>
        <fullName>Transcription initiation factor TFIID 70 kDa subunit</fullName>
        <shortName>TAF(II)70</shortName>
        <shortName>TAFII-70</shortName>
        <shortName>TAFII70</shortName>
    </alternativeName>
    <alternativeName>
        <fullName>Transcription initiation factor TFIID 80 kDa subunit</fullName>
        <shortName>TAF(II)80</shortName>
        <shortName>TAFII-80</shortName>
        <shortName>TAFII80</shortName>
    </alternativeName>
</protein>
<proteinExistence type="evidence at protein level"/>
<gene>
    <name type="primary">TAF6</name>
    <name type="synonym">TAF2E</name>
    <name type="synonym">TAFII70</name>
</gene>
<evidence type="ECO:0000250" key="1">
    <source>
        <dbReference type="UniProtKB" id="Q62311"/>
    </source>
</evidence>
<evidence type="ECO:0000250" key="2">
    <source>
        <dbReference type="UniProtKB" id="Q63801"/>
    </source>
</evidence>
<evidence type="ECO:0000256" key="3">
    <source>
        <dbReference type="SAM" id="MobiDB-lite"/>
    </source>
</evidence>
<evidence type="ECO:0000269" key="4">
    <source>
    </source>
</evidence>
<evidence type="ECO:0000269" key="5">
    <source>
    </source>
</evidence>
<evidence type="ECO:0000269" key="6">
    <source>
    </source>
</evidence>
<evidence type="ECO:0000269" key="7">
    <source>
    </source>
</evidence>
<evidence type="ECO:0000269" key="8">
    <source>
    </source>
</evidence>
<evidence type="ECO:0000269" key="9">
    <source>
    </source>
</evidence>
<evidence type="ECO:0000269" key="10">
    <source>
    </source>
</evidence>
<evidence type="ECO:0000269" key="11">
    <source>
    </source>
</evidence>
<evidence type="ECO:0000269" key="12">
    <source>
    </source>
</evidence>
<evidence type="ECO:0000269" key="13">
    <source>
    </source>
</evidence>
<evidence type="ECO:0000269" key="14">
    <source>
    </source>
</evidence>
<evidence type="ECO:0000269" key="15">
    <source>
    </source>
</evidence>
<evidence type="ECO:0000269" key="16">
    <source ref="5"/>
</evidence>
<evidence type="ECO:0000303" key="17">
    <source>
    </source>
</evidence>
<evidence type="ECO:0000303" key="18">
    <source>
    </source>
</evidence>
<evidence type="ECO:0000303" key="19">
    <source>
    </source>
</evidence>
<evidence type="ECO:0000303" key="20">
    <source>
    </source>
</evidence>
<evidence type="ECO:0000305" key="21"/>
<evidence type="ECO:0007744" key="22">
    <source>
        <dbReference type="PDB" id="7EDX"/>
    </source>
</evidence>
<evidence type="ECO:0007744" key="23">
    <source>
        <dbReference type="PDB" id="7EG7"/>
    </source>
</evidence>
<evidence type="ECO:0007744" key="24">
    <source>
        <dbReference type="PDB" id="7EG8"/>
    </source>
</evidence>
<evidence type="ECO:0007744" key="25">
    <source>
        <dbReference type="PDB" id="7EG9"/>
    </source>
</evidence>
<evidence type="ECO:0007744" key="26">
    <source>
        <dbReference type="PDB" id="7EGA"/>
    </source>
</evidence>
<evidence type="ECO:0007744" key="27">
    <source>
        <dbReference type="PDB" id="7EGB"/>
    </source>
</evidence>
<evidence type="ECO:0007744" key="28">
    <source>
        <dbReference type="PDB" id="7EGC"/>
    </source>
</evidence>
<evidence type="ECO:0007744" key="29">
    <source>
        <dbReference type="PDB" id="7EGD"/>
    </source>
</evidence>
<evidence type="ECO:0007744" key="30">
    <source>
        <dbReference type="PDB" id="7EGE"/>
    </source>
</evidence>
<evidence type="ECO:0007744" key="31">
    <source>
        <dbReference type="PDB" id="7EGF"/>
    </source>
</evidence>
<evidence type="ECO:0007744" key="32">
    <source>
    </source>
</evidence>
<evidence type="ECO:0007744" key="33">
    <source>
    </source>
</evidence>
<evidence type="ECO:0007744" key="34">
    <source>
    </source>
</evidence>
<evidence type="ECO:0007744" key="35">
    <source>
    </source>
</evidence>
<evidence type="ECO:0007744" key="36">
    <source>
    </source>
</evidence>
<evidence type="ECO:0007744" key="37">
    <source>
    </source>
</evidence>
<evidence type="ECO:0007829" key="38">
    <source>
        <dbReference type="PDB" id="6F3T"/>
    </source>
</evidence>
<evidence type="ECO:0007829" key="39">
    <source>
        <dbReference type="PDB" id="7EGF"/>
    </source>
</evidence>
<evidence type="ECO:0007829" key="40">
    <source>
        <dbReference type="PDB" id="7EGG"/>
    </source>
</evidence>
<evidence type="ECO:0007829" key="41">
    <source>
        <dbReference type="PDB" id="7EGH"/>
    </source>
</evidence>